<name>SPT2_SCHPO</name>
<organism>
    <name type="scientific">Schizosaccharomyces pombe (strain 972 / ATCC 24843)</name>
    <name type="common">Fission yeast</name>
    <dbReference type="NCBI Taxonomy" id="284812"/>
    <lineage>
        <taxon>Eukaryota</taxon>
        <taxon>Fungi</taxon>
        <taxon>Dikarya</taxon>
        <taxon>Ascomycota</taxon>
        <taxon>Taphrinomycotina</taxon>
        <taxon>Schizosaccharomycetes</taxon>
        <taxon>Schizosaccharomycetales</taxon>
        <taxon>Schizosaccharomycetaceae</taxon>
        <taxon>Schizosaccharomyces</taxon>
    </lineage>
</organism>
<comment type="function">
    <text evidence="1">Histone chaperone that stabilizes pre-existing histone tetramers and regulates replication-independent histone exchange on chromatin. Required for normal chromatin refolding in the coding region of transcribed genes, and for the suppression of spurious transcription. Global regulatory protein that plays positive as well as negative regulatory roles in transcription.</text>
</comment>
<comment type="subunit">
    <text evidence="1">Interacts with tetramers formed by histone H3 and H4.</text>
</comment>
<comment type="subcellular location">
    <subcellularLocation>
        <location evidence="4">Nucleus</location>
    </subcellularLocation>
</comment>
<comment type="domain">
    <text evidence="1">The acidic C-terminal domain mediates interaction with histone H3/H4 complexes.</text>
</comment>
<comment type="similarity">
    <text evidence="5">Belongs to the SPT2 family.</text>
</comment>
<accession>O94714</accession>
<feature type="chain" id="PRO_0000339143" description="Protein spt2">
    <location>
        <begin position="1"/>
        <end position="406"/>
    </location>
</feature>
<feature type="region of interest" description="Disordered" evidence="3">
    <location>
        <begin position="38"/>
        <end position="188"/>
    </location>
</feature>
<feature type="region of interest" description="Disordered" evidence="3">
    <location>
        <begin position="202"/>
        <end position="330"/>
    </location>
</feature>
<feature type="region of interest" description="Important for interaction with histones" evidence="1">
    <location>
        <begin position="340"/>
        <end position="406"/>
    </location>
</feature>
<feature type="region of interest" description="Disordered" evidence="3">
    <location>
        <begin position="383"/>
        <end position="406"/>
    </location>
</feature>
<feature type="coiled-coil region" evidence="2">
    <location>
        <begin position="19"/>
        <end position="111"/>
    </location>
</feature>
<feature type="coiled-coil region" evidence="2">
    <location>
        <begin position="370"/>
        <end position="406"/>
    </location>
</feature>
<feature type="compositionally biased region" description="Basic and acidic residues" evidence="3">
    <location>
        <begin position="38"/>
        <end position="74"/>
    </location>
</feature>
<feature type="compositionally biased region" description="Basic and acidic residues" evidence="3">
    <location>
        <begin position="91"/>
        <end position="114"/>
    </location>
</feature>
<feature type="compositionally biased region" description="Polar residues" evidence="3">
    <location>
        <begin position="125"/>
        <end position="141"/>
    </location>
</feature>
<feature type="compositionally biased region" description="Polar residues" evidence="3">
    <location>
        <begin position="159"/>
        <end position="178"/>
    </location>
</feature>
<feature type="compositionally biased region" description="Polar residues" evidence="3">
    <location>
        <begin position="259"/>
        <end position="279"/>
    </location>
</feature>
<feature type="compositionally biased region" description="Polar residues" evidence="3">
    <location>
        <begin position="287"/>
        <end position="307"/>
    </location>
</feature>
<feature type="compositionally biased region" description="Basic and acidic residues" evidence="3">
    <location>
        <begin position="383"/>
        <end position="398"/>
    </location>
</feature>
<keyword id="KW-0010">Activator</keyword>
<keyword id="KW-0175">Coiled coil</keyword>
<keyword id="KW-0238">DNA-binding</keyword>
<keyword id="KW-0539">Nucleus</keyword>
<keyword id="KW-1185">Reference proteome</keyword>
<keyword id="KW-0678">Repressor</keyword>
<keyword id="KW-0804">Transcription</keyword>
<keyword id="KW-0805">Transcription regulation</keyword>
<protein>
    <recommendedName>
        <fullName>Protein spt2</fullName>
    </recommendedName>
</protein>
<dbReference type="EMBL" id="CU329672">
    <property type="protein sequence ID" value="CAB38158.1"/>
    <property type="molecule type" value="Genomic_DNA"/>
</dbReference>
<dbReference type="PIR" id="T40950">
    <property type="entry name" value="T40950"/>
</dbReference>
<dbReference type="RefSeq" id="NP_587960.1">
    <property type="nucleotide sequence ID" value="NM_001022951.2"/>
</dbReference>
<dbReference type="SMR" id="O94714"/>
<dbReference type="BioGRID" id="275468">
    <property type="interactions" value="23"/>
</dbReference>
<dbReference type="FunCoup" id="O94714">
    <property type="interactions" value="62"/>
</dbReference>
<dbReference type="STRING" id="284812.O94714"/>
<dbReference type="iPTMnet" id="O94714"/>
<dbReference type="PaxDb" id="4896-SPCC1393.02c.1"/>
<dbReference type="EnsemblFungi" id="SPCC1393.02c.1">
    <property type="protein sequence ID" value="SPCC1393.02c.1:pep"/>
    <property type="gene ID" value="SPCC1393.02c"/>
</dbReference>
<dbReference type="GeneID" id="2538890"/>
<dbReference type="KEGG" id="spo:2538890"/>
<dbReference type="PomBase" id="SPCC1393.02c">
    <property type="gene designation" value="spt2"/>
</dbReference>
<dbReference type="VEuPathDB" id="FungiDB:SPCC1393.02c"/>
<dbReference type="eggNOG" id="ENOG502QRJX">
    <property type="taxonomic scope" value="Eukaryota"/>
</dbReference>
<dbReference type="HOGENOM" id="CLU_767599_0_0_1"/>
<dbReference type="InParanoid" id="O94714"/>
<dbReference type="OMA" id="TPTIYNR"/>
<dbReference type="PhylomeDB" id="O94714"/>
<dbReference type="PRO" id="PR:O94714"/>
<dbReference type="Proteomes" id="UP000002485">
    <property type="component" value="Chromosome III"/>
</dbReference>
<dbReference type="GO" id="GO:0000792">
    <property type="term" value="C:heterochromatin"/>
    <property type="evidence" value="ECO:0000255"/>
    <property type="project" value="PomBase"/>
</dbReference>
<dbReference type="GO" id="GO:0072686">
    <property type="term" value="C:mitotic spindle"/>
    <property type="evidence" value="ECO:0007005"/>
    <property type="project" value="PomBase"/>
</dbReference>
<dbReference type="GO" id="GO:0005730">
    <property type="term" value="C:nucleolus"/>
    <property type="evidence" value="ECO:0007005"/>
    <property type="project" value="PomBase"/>
</dbReference>
<dbReference type="GO" id="GO:0005634">
    <property type="term" value="C:nucleus"/>
    <property type="evidence" value="ECO:0007005"/>
    <property type="project" value="PomBase"/>
</dbReference>
<dbReference type="GO" id="GO:0003677">
    <property type="term" value="F:DNA binding"/>
    <property type="evidence" value="ECO:0000318"/>
    <property type="project" value="GO_Central"/>
</dbReference>
<dbReference type="GO" id="GO:0000510">
    <property type="term" value="F:H3-H4 histone complex chaperone activity"/>
    <property type="evidence" value="ECO:0000305"/>
    <property type="project" value="PomBase"/>
</dbReference>
<dbReference type="GO" id="GO:0042393">
    <property type="term" value="F:histone binding"/>
    <property type="evidence" value="ECO:0000318"/>
    <property type="project" value="GO_Central"/>
</dbReference>
<dbReference type="GO" id="GO:0006334">
    <property type="term" value="P:nucleosome assembly"/>
    <property type="evidence" value="ECO:0000318"/>
    <property type="project" value="GO_Central"/>
</dbReference>
<dbReference type="GO" id="GO:0006360">
    <property type="term" value="P:transcription by RNA polymerase I"/>
    <property type="evidence" value="ECO:0000318"/>
    <property type="project" value="GO_Central"/>
</dbReference>
<dbReference type="GO" id="GO:0140673">
    <property type="term" value="P:transcription elongation-coupled chromatin remodeling"/>
    <property type="evidence" value="ECO:0000303"/>
    <property type="project" value="PomBase"/>
</dbReference>
<dbReference type="InterPro" id="IPR013256">
    <property type="entry name" value="Chromatin_SPT2"/>
</dbReference>
<dbReference type="PANTHER" id="PTHR22691:SF8">
    <property type="entry name" value="PROTEIN SPT2 HOMOLOG"/>
    <property type="match status" value="1"/>
</dbReference>
<dbReference type="PANTHER" id="PTHR22691">
    <property type="entry name" value="YEAST SPT2-RELATED"/>
    <property type="match status" value="1"/>
</dbReference>
<dbReference type="Pfam" id="PF08243">
    <property type="entry name" value="SPT2"/>
    <property type="match status" value="1"/>
</dbReference>
<dbReference type="SMART" id="SM00784">
    <property type="entry name" value="SPT2"/>
    <property type="match status" value="1"/>
</dbReference>
<reference key="1">
    <citation type="journal article" date="2002" name="Nature">
        <title>The genome sequence of Schizosaccharomyces pombe.</title>
        <authorList>
            <person name="Wood V."/>
            <person name="Gwilliam R."/>
            <person name="Rajandream M.A."/>
            <person name="Lyne M.H."/>
            <person name="Lyne R."/>
            <person name="Stewart A."/>
            <person name="Sgouros J.G."/>
            <person name="Peat N."/>
            <person name="Hayles J."/>
            <person name="Baker S.G."/>
            <person name="Basham D."/>
            <person name="Bowman S."/>
            <person name="Brooks K."/>
            <person name="Brown D."/>
            <person name="Brown S."/>
            <person name="Chillingworth T."/>
            <person name="Churcher C.M."/>
            <person name="Collins M."/>
            <person name="Connor R."/>
            <person name="Cronin A."/>
            <person name="Davis P."/>
            <person name="Feltwell T."/>
            <person name="Fraser A."/>
            <person name="Gentles S."/>
            <person name="Goble A."/>
            <person name="Hamlin N."/>
            <person name="Harris D.E."/>
            <person name="Hidalgo J."/>
            <person name="Hodgson G."/>
            <person name="Holroyd S."/>
            <person name="Hornsby T."/>
            <person name="Howarth S."/>
            <person name="Huckle E.J."/>
            <person name="Hunt S."/>
            <person name="Jagels K."/>
            <person name="James K.D."/>
            <person name="Jones L."/>
            <person name="Jones M."/>
            <person name="Leather S."/>
            <person name="McDonald S."/>
            <person name="McLean J."/>
            <person name="Mooney P."/>
            <person name="Moule S."/>
            <person name="Mungall K.L."/>
            <person name="Murphy L.D."/>
            <person name="Niblett D."/>
            <person name="Odell C."/>
            <person name="Oliver K."/>
            <person name="O'Neil S."/>
            <person name="Pearson D."/>
            <person name="Quail M.A."/>
            <person name="Rabbinowitsch E."/>
            <person name="Rutherford K.M."/>
            <person name="Rutter S."/>
            <person name="Saunders D."/>
            <person name="Seeger K."/>
            <person name="Sharp S."/>
            <person name="Skelton J."/>
            <person name="Simmonds M.N."/>
            <person name="Squares R."/>
            <person name="Squares S."/>
            <person name="Stevens K."/>
            <person name="Taylor K."/>
            <person name="Taylor R.G."/>
            <person name="Tivey A."/>
            <person name="Walsh S.V."/>
            <person name="Warren T."/>
            <person name="Whitehead S."/>
            <person name="Woodward J.R."/>
            <person name="Volckaert G."/>
            <person name="Aert R."/>
            <person name="Robben J."/>
            <person name="Grymonprez B."/>
            <person name="Weltjens I."/>
            <person name="Vanstreels E."/>
            <person name="Rieger M."/>
            <person name="Schaefer M."/>
            <person name="Mueller-Auer S."/>
            <person name="Gabel C."/>
            <person name="Fuchs M."/>
            <person name="Duesterhoeft A."/>
            <person name="Fritzc C."/>
            <person name="Holzer E."/>
            <person name="Moestl D."/>
            <person name="Hilbert H."/>
            <person name="Borzym K."/>
            <person name="Langer I."/>
            <person name="Beck A."/>
            <person name="Lehrach H."/>
            <person name="Reinhardt R."/>
            <person name="Pohl T.M."/>
            <person name="Eger P."/>
            <person name="Zimmermann W."/>
            <person name="Wedler H."/>
            <person name="Wambutt R."/>
            <person name="Purnelle B."/>
            <person name="Goffeau A."/>
            <person name="Cadieu E."/>
            <person name="Dreano S."/>
            <person name="Gloux S."/>
            <person name="Lelaure V."/>
            <person name="Mottier S."/>
            <person name="Galibert F."/>
            <person name="Aves S.J."/>
            <person name="Xiang Z."/>
            <person name="Hunt C."/>
            <person name="Moore K."/>
            <person name="Hurst S.M."/>
            <person name="Lucas M."/>
            <person name="Rochet M."/>
            <person name="Gaillardin C."/>
            <person name="Tallada V.A."/>
            <person name="Garzon A."/>
            <person name="Thode G."/>
            <person name="Daga R.R."/>
            <person name="Cruzado L."/>
            <person name="Jimenez J."/>
            <person name="Sanchez M."/>
            <person name="del Rey F."/>
            <person name="Benito J."/>
            <person name="Dominguez A."/>
            <person name="Revuelta J.L."/>
            <person name="Moreno S."/>
            <person name="Armstrong J."/>
            <person name="Forsburg S.L."/>
            <person name="Cerutti L."/>
            <person name="Lowe T."/>
            <person name="McCombie W.R."/>
            <person name="Paulsen I."/>
            <person name="Potashkin J."/>
            <person name="Shpakovski G.V."/>
            <person name="Ussery D."/>
            <person name="Barrell B.G."/>
            <person name="Nurse P."/>
        </authorList>
    </citation>
    <scope>NUCLEOTIDE SEQUENCE [LARGE SCALE GENOMIC DNA]</scope>
    <source>
        <strain>972 / ATCC 24843</strain>
    </source>
</reference>
<reference key="2">
    <citation type="journal article" date="2006" name="Nat. Biotechnol.">
        <title>ORFeome cloning and global analysis of protein localization in the fission yeast Schizosaccharomyces pombe.</title>
        <authorList>
            <person name="Matsuyama A."/>
            <person name="Arai R."/>
            <person name="Yashiroda Y."/>
            <person name="Shirai A."/>
            <person name="Kamata A."/>
            <person name="Sekido S."/>
            <person name="Kobayashi Y."/>
            <person name="Hashimoto A."/>
            <person name="Hamamoto M."/>
            <person name="Hiraoka Y."/>
            <person name="Horinouchi S."/>
            <person name="Yoshida M."/>
        </authorList>
    </citation>
    <scope>SUBCELLULAR LOCATION [LARGE SCALE ANALYSIS]</scope>
</reference>
<evidence type="ECO:0000250" key="1">
    <source>
        <dbReference type="UniProtKB" id="P06843"/>
    </source>
</evidence>
<evidence type="ECO:0000255" key="2"/>
<evidence type="ECO:0000256" key="3">
    <source>
        <dbReference type="SAM" id="MobiDB-lite"/>
    </source>
</evidence>
<evidence type="ECO:0000269" key="4">
    <source>
    </source>
</evidence>
<evidence type="ECO:0000305" key="5"/>
<proteinExistence type="inferred from homology"/>
<sequence>MAGTPSFQKLMALADSQSAQAAVQIEQLRKAQIREKAREITEERNRQRKLQRERELRQKYEEEQRRQQAMEAKRIAASTRQTSERPPLSAEEAKRIREVKEKDRLESKKNERQGKPRSYNELLRQASSAPAVNETSSSGLLQSKDKRSQSPHSPKKPVKNSSSRDQPVRNSGATSTASLPPAGLRAGRGSQISASLAWLKTGGASAAPSNPRQPPPTSNFSNRKARYASNGLVQLQTGPKRDKRSAGEVQDEIMKRRQNSSISQAATPRTVSNSETSYVGSPALKQSKPNSLKSNNTSRKTSASSAITKPKARPHTSRHDEFVVSDDDELNDRVPDVSSEIWKIFGKRKQDYVSRDVFSDEDDMEATGHDVWREEQAAARAARLEDELEEQRERERELAKKRRKNK</sequence>
<gene>
    <name type="primary">spt2</name>
    <name type="ORF">SPCC1393.02c</name>
</gene>